<gene>
    <name evidence="10" type="primary">Nfe2l2</name>
    <name evidence="7" type="synonym">Nrf2</name>
</gene>
<protein>
    <recommendedName>
        <fullName evidence="7">Nuclear factor erythroid 2-related factor 2</fullName>
        <shortName evidence="7">NF-E2-related factor 2</shortName>
        <shortName evidence="7">NFE2-related factor 2</shortName>
    </recommendedName>
    <alternativeName>
        <fullName evidence="1">Nuclear factor, erythroid derived 2, like 2</fullName>
    </alternativeName>
</protein>
<feature type="chain" id="PRO_0000076451" description="Nuclear factor erythroid 2-related factor 2">
    <location>
        <begin position="1"/>
        <end position="604"/>
    </location>
</feature>
<feature type="domain" description="bZIP" evidence="3">
    <location>
        <begin position="496"/>
        <end position="559"/>
    </location>
</feature>
<feature type="region of interest" description="Disordered" evidence="4">
    <location>
        <begin position="334"/>
        <end position="447"/>
    </location>
</feature>
<feature type="region of interest" description="Basic motif" evidence="3">
    <location>
        <begin position="498"/>
        <end position="517"/>
    </location>
</feature>
<feature type="region of interest" description="Leucine-zipper" evidence="3">
    <location>
        <begin position="521"/>
        <end position="528"/>
    </location>
</feature>
<feature type="region of interest" description="Disordered" evidence="4">
    <location>
        <begin position="570"/>
        <end position="604"/>
    </location>
</feature>
<feature type="region of interest" description="Mediates interaction with CHD6 and is necessary to activate transcription" evidence="6">
    <location>
        <begin position="590"/>
        <end position="595"/>
    </location>
</feature>
<feature type="short sequence motif" description="DLG motif" evidence="2">
    <location>
        <begin position="29"/>
        <end position="31"/>
    </location>
</feature>
<feature type="short sequence motif" description="ETGE motif" evidence="2">
    <location>
        <begin position="79"/>
        <end position="82"/>
    </location>
</feature>
<feature type="compositionally biased region" description="Polar residues" evidence="4">
    <location>
        <begin position="340"/>
        <end position="352"/>
    </location>
</feature>
<feature type="compositionally biased region" description="Polar residues" evidence="4">
    <location>
        <begin position="395"/>
        <end position="407"/>
    </location>
</feature>
<feature type="compositionally biased region" description="Polar residues" evidence="4">
    <location>
        <begin position="578"/>
        <end position="587"/>
    </location>
</feature>
<feature type="modified residue" description="Phosphoserine; by PKC" evidence="5">
    <location>
        <position position="40"/>
    </location>
</feature>
<feature type="modified residue" description="Phosphoserine" evidence="1">
    <location>
        <position position="214"/>
    </location>
</feature>
<feature type="modified residue" description="N6-acetyllysine; by CREBBP" evidence="1">
    <location>
        <position position="595"/>
    </location>
</feature>
<feature type="modified residue" description="N6-acetyllysine; by CREBBP" evidence="1">
    <location>
        <position position="598"/>
    </location>
</feature>
<feature type="glycosylation site" description="N-linked (Glc) (glycation) lysine" evidence="1">
    <location>
        <position position="461"/>
    </location>
</feature>
<feature type="glycosylation site" description="N-linked (Glc) (glycation) lysine" evidence="1">
    <location>
        <position position="471"/>
    </location>
</feature>
<feature type="glycosylation site" description="N-linked (Glc) (glycation) lysine" evidence="1">
    <location>
        <position position="486"/>
    </location>
</feature>
<feature type="glycosylation site" description="N-linked (Glc) (glycation) arginine" evidence="1">
    <location>
        <position position="498"/>
    </location>
</feature>
<feature type="glycosylation site" description="N-linked (Glc) (glycation) arginine" evidence="1">
    <location>
        <position position="568"/>
    </location>
</feature>
<feature type="glycosylation site" description="N-linked (Glc) (glycation) lysine" evidence="1">
    <location>
        <position position="573"/>
    </location>
</feature>
<feature type="splice variant" id="VSP_025046" description="In isoform 2." evidence="8">
    <location>
        <begin position="135"/>
        <end position="141"/>
    </location>
</feature>
<feature type="mutagenesis site" description="Fails to dissociate from KEAP1 after PKC activation." evidence="5">
    <original>S</original>
    <variation>A</variation>
    <location>
        <position position="40"/>
    </location>
</feature>
<proteinExistence type="evidence at protein level"/>
<organism>
    <name type="scientific">Rattus norvegicus</name>
    <name type="common">Rat</name>
    <dbReference type="NCBI Taxonomy" id="10116"/>
    <lineage>
        <taxon>Eukaryota</taxon>
        <taxon>Metazoa</taxon>
        <taxon>Chordata</taxon>
        <taxon>Craniata</taxon>
        <taxon>Vertebrata</taxon>
        <taxon>Euteleostomi</taxon>
        <taxon>Mammalia</taxon>
        <taxon>Eutheria</taxon>
        <taxon>Euarchontoglires</taxon>
        <taxon>Glires</taxon>
        <taxon>Rodentia</taxon>
        <taxon>Myomorpha</taxon>
        <taxon>Muroidea</taxon>
        <taxon>Muridae</taxon>
        <taxon>Murinae</taxon>
        <taxon>Rattus</taxon>
    </lineage>
</organism>
<reference key="1">
    <citation type="submission" date="1997-12" db="EMBL/GenBank/DDBJ databases">
        <authorList>
            <person name="Sakai M."/>
            <person name="Ito M."/>
            <person name="Sasaki K."/>
            <person name="Nishi S."/>
        </authorList>
    </citation>
    <scope>NUCLEOTIDE SEQUENCE [MRNA] (ISOFORM 2)</scope>
    <source>
        <strain>Wistar</strain>
        <tissue>Liver</tissue>
    </source>
</reference>
<reference key="2">
    <citation type="journal article" date="2004" name="Genome Res.">
        <title>The status, quality, and expansion of the NIH full-length cDNA project: the Mammalian Gene Collection (MGC).</title>
        <authorList>
            <consortium name="The MGC Project Team"/>
        </authorList>
    </citation>
    <scope>NUCLEOTIDE SEQUENCE [LARGE SCALE MRNA] (ISOFORM 1)</scope>
    <source>
        <tissue>Prostate</tissue>
    </source>
</reference>
<reference key="3">
    <citation type="journal article" date="2002" name="J. Biol. Chem.">
        <title>Phosphorylation of Nrf2 at Ser-40 by protein kinase C regulates antioxidant response element-mediated transcription.</title>
        <authorList>
            <person name="Huang H.-C."/>
            <person name="Nguyen T."/>
            <person name="Pickett C.B."/>
        </authorList>
    </citation>
    <scope>PHOSPHORYLATION AT SER-40</scope>
    <scope>MUTAGENESIS OF SER-40</scope>
</reference>
<reference key="4">
    <citation type="journal article" date="2005" name="Mol. Cell. Biol.">
        <title>The carboxy-terminal Neh3 domain of Nrf2 is required for transcriptional activation.</title>
        <authorList>
            <person name="Nioi P."/>
            <person name="Nguyen T."/>
            <person name="Sherratt P.J."/>
            <person name="Pickett C.B."/>
        </authorList>
    </citation>
    <scope>FUNCTION</scope>
    <scope>INTERACTION WITH CHD6 AND MAFK</scope>
    <scope>SUBCELLULAR LOCATION</scope>
    <scope>REGION</scope>
</reference>
<sequence length="604" mass="67703">MMDLELPPPGLQSQQDMDLIDILWRQDIDLGVSREVFDFSQRQKDYELEKQKKLEKERQEQLQKEQEKAFFAQLQLDEETGEFLPIQPAQHIQTDTSGSVSYSQVAHIPKQDALYFEDCMQLLAETFPFVDDHEVSSPTFQSLALDIPSHVESSVFTTPDQAQSLDSSLETAMTDLSSIQQDMEQVWQELFSIPELQCLNTENKQQAETTTVPSPEATLTEMDSNYHFYSSIPSLEKEVDSCSPHFLHGFEDSFSSILSTDDASQLNSLDSNPTLNTDFGDEFYSAFLAEPSGGGSMPSSAAISQSLSELLGGPIEGCDLSLCKAFNQKHTEGTVEFNDSDSGISLNTSPSRASPEHSVESSIYGDPPPGFSDSEMEELDSAPGSVKQNGPKAQPTHSSGDTVQPLSPAQGHSAAVHESQCENTTKKEVPVSPGHQKVPFTKDKHSSRLEAHLTRDELRAKALHIPFPVEKIINLPVDDFNEMMSKEQFNEAQLALIRDIRRRGKNKVAAQNCRKRKLENIVELEQDLGHLKDEREKLLREKGENDRNLHLLKRKLSTLYLEVFSMLRDEDGKPYSPSEYSLQQTRDGNVFLVPKSKKPDTKKN</sequence>
<keyword id="KW-0007">Acetylation</keyword>
<keyword id="KW-0010">Activator</keyword>
<keyword id="KW-0025">Alternative splicing</keyword>
<keyword id="KW-0963">Cytoplasm</keyword>
<keyword id="KW-0238">DNA-binding</keyword>
<keyword id="KW-0971">Glycation</keyword>
<keyword id="KW-0325">Glycoprotein</keyword>
<keyword id="KW-0539">Nucleus</keyword>
<keyword id="KW-0597">Phosphoprotein</keyword>
<keyword id="KW-1185">Reference proteome</keyword>
<keyword id="KW-0804">Transcription</keyword>
<keyword id="KW-0805">Transcription regulation</keyword>
<keyword id="KW-0832">Ubl conjugation</keyword>
<name>NF2L2_RAT</name>
<accession>O54968</accession>
<accession>Q6P7C8</accession>
<evidence type="ECO:0000250" key="1">
    <source>
        <dbReference type="UniProtKB" id="Q16236"/>
    </source>
</evidence>
<evidence type="ECO:0000250" key="2">
    <source>
        <dbReference type="UniProtKB" id="Q60795"/>
    </source>
</evidence>
<evidence type="ECO:0000255" key="3">
    <source>
        <dbReference type="PROSITE-ProRule" id="PRU00978"/>
    </source>
</evidence>
<evidence type="ECO:0000256" key="4">
    <source>
        <dbReference type="SAM" id="MobiDB-lite"/>
    </source>
</evidence>
<evidence type="ECO:0000269" key="5">
    <source>
    </source>
</evidence>
<evidence type="ECO:0000269" key="6">
    <source>
    </source>
</evidence>
<evidence type="ECO:0000303" key="7">
    <source>
    </source>
</evidence>
<evidence type="ECO:0000303" key="8">
    <source ref="1"/>
</evidence>
<evidence type="ECO:0000305" key="9"/>
<evidence type="ECO:0000312" key="10">
    <source>
        <dbReference type="RGD" id="620360"/>
    </source>
</evidence>
<dbReference type="EMBL" id="AF037350">
    <property type="protein sequence ID" value="AAB92256.1"/>
    <property type="molecule type" value="mRNA"/>
</dbReference>
<dbReference type="EMBL" id="BC061724">
    <property type="protein sequence ID" value="AAH61724.1"/>
    <property type="molecule type" value="mRNA"/>
</dbReference>
<dbReference type="RefSeq" id="NP_001386102.1">
    <molecule id="O54968-1"/>
    <property type="nucleotide sequence ID" value="NM_001399173.1"/>
</dbReference>
<dbReference type="RefSeq" id="NP_113977.1">
    <molecule id="O54968-2"/>
    <property type="nucleotide sequence ID" value="NM_031789.3"/>
</dbReference>
<dbReference type="RefSeq" id="XP_006234458.1">
    <property type="nucleotide sequence ID" value="XM_006234396.3"/>
</dbReference>
<dbReference type="RefSeq" id="XP_063140721.1">
    <molecule id="O54968-1"/>
    <property type="nucleotide sequence ID" value="XM_063284651.1"/>
</dbReference>
<dbReference type="RefSeq" id="XP_063140722.1">
    <molecule id="O54968-2"/>
    <property type="nucleotide sequence ID" value="XM_063284652.1"/>
</dbReference>
<dbReference type="SMR" id="O54968"/>
<dbReference type="BioGRID" id="249784">
    <property type="interactions" value="2"/>
</dbReference>
<dbReference type="FunCoup" id="O54968">
    <property type="interactions" value="976"/>
</dbReference>
<dbReference type="STRING" id="10116.ENSRNOP00000002114"/>
<dbReference type="ChEMBL" id="CHEMBL1075141"/>
<dbReference type="GlyCosmos" id="O54968">
    <property type="glycosylation" value="6 sites, No reported glycans"/>
</dbReference>
<dbReference type="iPTMnet" id="O54968"/>
<dbReference type="PhosphoSitePlus" id="O54968"/>
<dbReference type="PaxDb" id="10116-ENSRNOP00000002114"/>
<dbReference type="Ensembl" id="ENSRNOT00000002114.7">
    <molecule id="O54968-1"/>
    <property type="protein sequence ID" value="ENSRNOP00000002114.6"/>
    <property type="gene ID" value="ENSRNOG00000001548.7"/>
</dbReference>
<dbReference type="GeneID" id="83619"/>
<dbReference type="KEGG" id="rno:83619"/>
<dbReference type="UCSC" id="RGD:620360">
    <molecule id="O54968-1"/>
    <property type="organism name" value="rat"/>
</dbReference>
<dbReference type="AGR" id="RGD:620360"/>
<dbReference type="CTD" id="4780"/>
<dbReference type="RGD" id="620360">
    <property type="gene designation" value="Nfe2l2"/>
</dbReference>
<dbReference type="eggNOG" id="KOG3863">
    <property type="taxonomic scope" value="Eukaryota"/>
</dbReference>
<dbReference type="GeneTree" id="ENSGT00950000182892"/>
<dbReference type="InParanoid" id="O54968"/>
<dbReference type="OMA" id="DMEEMDQ"/>
<dbReference type="PhylomeDB" id="O54968"/>
<dbReference type="Reactome" id="R-RNO-8951664">
    <property type="pathway name" value="Neddylation"/>
</dbReference>
<dbReference type="Reactome" id="R-RNO-9755511">
    <property type="pathway name" value="KEAP1-NFE2L2 pathway"/>
</dbReference>
<dbReference type="Reactome" id="R-RNO-9759194">
    <property type="pathway name" value="Nuclear events mediated by NFE2L2"/>
</dbReference>
<dbReference type="Reactome" id="R-RNO-9762114">
    <property type="pathway name" value="GSK3B and BTRC:CUL1-mediated-degradation of NFE2L2"/>
</dbReference>
<dbReference type="PRO" id="PR:O54968"/>
<dbReference type="Proteomes" id="UP000002494">
    <property type="component" value="Chromosome 3"/>
</dbReference>
<dbReference type="Bgee" id="ENSRNOG00000001548">
    <property type="expression patterns" value="Expressed in stomach and 20 other cell types or tissues"/>
</dbReference>
<dbReference type="GO" id="GO:0005813">
    <property type="term" value="C:centrosome"/>
    <property type="evidence" value="ECO:0007669"/>
    <property type="project" value="Ensembl"/>
</dbReference>
<dbReference type="GO" id="GO:0000785">
    <property type="term" value="C:chromatin"/>
    <property type="evidence" value="ECO:0000266"/>
    <property type="project" value="RGD"/>
</dbReference>
<dbReference type="GO" id="GO:0036064">
    <property type="term" value="C:ciliary basal body"/>
    <property type="evidence" value="ECO:0007669"/>
    <property type="project" value="Ensembl"/>
</dbReference>
<dbReference type="GO" id="GO:0005737">
    <property type="term" value="C:cytoplasm"/>
    <property type="evidence" value="ECO:0000266"/>
    <property type="project" value="RGD"/>
</dbReference>
<dbReference type="GO" id="GO:0005829">
    <property type="term" value="C:cytosol"/>
    <property type="evidence" value="ECO:0000266"/>
    <property type="project" value="RGD"/>
</dbReference>
<dbReference type="GO" id="GO:0005794">
    <property type="term" value="C:Golgi apparatus"/>
    <property type="evidence" value="ECO:0007669"/>
    <property type="project" value="Ensembl"/>
</dbReference>
<dbReference type="GO" id="GO:0016592">
    <property type="term" value="C:mediator complex"/>
    <property type="evidence" value="ECO:0000266"/>
    <property type="project" value="RGD"/>
</dbReference>
<dbReference type="GO" id="GO:0005654">
    <property type="term" value="C:nucleoplasm"/>
    <property type="evidence" value="ECO:0007669"/>
    <property type="project" value="Ensembl"/>
</dbReference>
<dbReference type="GO" id="GO:0005634">
    <property type="term" value="C:nucleus"/>
    <property type="evidence" value="ECO:0000314"/>
    <property type="project" value="UniProtKB"/>
</dbReference>
<dbReference type="GO" id="GO:0005886">
    <property type="term" value="C:plasma membrane"/>
    <property type="evidence" value="ECO:0007669"/>
    <property type="project" value="Ensembl"/>
</dbReference>
<dbReference type="GO" id="GO:0032993">
    <property type="term" value="C:protein-DNA complex"/>
    <property type="evidence" value="ECO:0000266"/>
    <property type="project" value="RGD"/>
</dbReference>
<dbReference type="GO" id="GO:0090575">
    <property type="term" value="C:RNA polymerase II transcription regulator complex"/>
    <property type="evidence" value="ECO:0000266"/>
    <property type="project" value="RGD"/>
</dbReference>
<dbReference type="GO" id="GO:0003677">
    <property type="term" value="F:DNA binding"/>
    <property type="evidence" value="ECO:0000266"/>
    <property type="project" value="RGD"/>
</dbReference>
<dbReference type="GO" id="GO:0001228">
    <property type="term" value="F:DNA-binding transcription activator activity, RNA polymerase II-specific"/>
    <property type="evidence" value="ECO:0000266"/>
    <property type="project" value="RGD"/>
</dbReference>
<dbReference type="GO" id="GO:0003700">
    <property type="term" value="F:DNA-binding transcription factor activity"/>
    <property type="evidence" value="ECO:0000250"/>
    <property type="project" value="UniProtKB"/>
</dbReference>
<dbReference type="GO" id="GO:0000981">
    <property type="term" value="F:DNA-binding transcription factor activity, RNA polymerase II-specific"/>
    <property type="evidence" value="ECO:0000318"/>
    <property type="project" value="GO_Central"/>
</dbReference>
<dbReference type="GO" id="GO:0140693">
    <property type="term" value="F:molecular condensate scaffold activity"/>
    <property type="evidence" value="ECO:0000266"/>
    <property type="project" value="RGD"/>
</dbReference>
<dbReference type="GO" id="GO:0019904">
    <property type="term" value="F:protein domain specific binding"/>
    <property type="evidence" value="ECO:0000266"/>
    <property type="project" value="RGD"/>
</dbReference>
<dbReference type="GO" id="GO:0000978">
    <property type="term" value="F:RNA polymerase II cis-regulatory region sequence-specific DNA binding"/>
    <property type="evidence" value="ECO:0000266"/>
    <property type="project" value="RGD"/>
</dbReference>
<dbReference type="GO" id="GO:0061629">
    <property type="term" value="F:RNA polymerase II-specific DNA-binding transcription factor binding"/>
    <property type="evidence" value="ECO:0000266"/>
    <property type="project" value="RGD"/>
</dbReference>
<dbReference type="GO" id="GO:0043565">
    <property type="term" value="F:sequence-specific DNA binding"/>
    <property type="evidence" value="ECO:0000266"/>
    <property type="project" value="RGD"/>
</dbReference>
<dbReference type="GO" id="GO:0000976">
    <property type="term" value="F:transcription cis-regulatory region binding"/>
    <property type="evidence" value="ECO:0000314"/>
    <property type="project" value="UniProtKB"/>
</dbReference>
<dbReference type="GO" id="GO:0001221">
    <property type="term" value="F:transcription coregulator binding"/>
    <property type="evidence" value="ECO:0000353"/>
    <property type="project" value="UniProtKB"/>
</dbReference>
<dbReference type="GO" id="GO:0031625">
    <property type="term" value="F:ubiquitin protein ligase binding"/>
    <property type="evidence" value="ECO:0000266"/>
    <property type="project" value="RGD"/>
</dbReference>
<dbReference type="GO" id="GO:0046223">
    <property type="term" value="P:aflatoxin catabolic process"/>
    <property type="evidence" value="ECO:0000315"/>
    <property type="project" value="RGD"/>
</dbReference>
<dbReference type="GO" id="GO:0045454">
    <property type="term" value="P:cell redox homeostasis"/>
    <property type="evidence" value="ECO:0000315"/>
    <property type="project" value="UniProtKB"/>
</dbReference>
<dbReference type="GO" id="GO:1904385">
    <property type="term" value="P:cellular response to angiotensin"/>
    <property type="evidence" value="ECO:0000314"/>
    <property type="project" value="RGD"/>
</dbReference>
<dbReference type="GO" id="GO:0071280">
    <property type="term" value="P:cellular response to copper ion"/>
    <property type="evidence" value="ECO:0000266"/>
    <property type="project" value="RGD"/>
</dbReference>
<dbReference type="GO" id="GO:0071498">
    <property type="term" value="P:cellular response to fluid shear stress"/>
    <property type="evidence" value="ECO:0000250"/>
    <property type="project" value="UniProtKB"/>
</dbReference>
<dbReference type="GO" id="GO:0042149">
    <property type="term" value="P:cellular response to glucose starvation"/>
    <property type="evidence" value="ECO:0000266"/>
    <property type="project" value="RGD"/>
</dbReference>
<dbReference type="GO" id="GO:0070301">
    <property type="term" value="P:cellular response to hydrogen peroxide"/>
    <property type="evidence" value="ECO:0000266"/>
    <property type="project" value="RGD"/>
</dbReference>
<dbReference type="GO" id="GO:0071456">
    <property type="term" value="P:cellular response to hypoxia"/>
    <property type="evidence" value="ECO:0000270"/>
    <property type="project" value="RGD"/>
</dbReference>
<dbReference type="GO" id="GO:0071499">
    <property type="term" value="P:cellular response to laminar fluid shear stress"/>
    <property type="evidence" value="ECO:0000266"/>
    <property type="project" value="RGD"/>
</dbReference>
<dbReference type="GO" id="GO:0061431">
    <property type="term" value="P:cellular response to methionine"/>
    <property type="evidence" value="ECO:0000270"/>
    <property type="project" value="RGD"/>
</dbReference>
<dbReference type="GO" id="GO:0034599">
    <property type="term" value="P:cellular response to oxidative stress"/>
    <property type="evidence" value="ECO:0000250"/>
    <property type="project" value="UniProtKB"/>
</dbReference>
<dbReference type="GO" id="GO:0071356">
    <property type="term" value="P:cellular response to tumor necrosis factor"/>
    <property type="evidence" value="ECO:0000270"/>
    <property type="project" value="RGD"/>
</dbReference>
<dbReference type="GO" id="GO:0071466">
    <property type="term" value="P:cellular response to xenobiotic stimulus"/>
    <property type="evidence" value="ECO:0000266"/>
    <property type="project" value="RGD"/>
</dbReference>
<dbReference type="GO" id="GO:0030968">
    <property type="term" value="P:endoplasmic reticulum unfolded protein response"/>
    <property type="evidence" value="ECO:0000266"/>
    <property type="project" value="RGD"/>
</dbReference>
<dbReference type="GO" id="GO:0006954">
    <property type="term" value="P:inflammatory response"/>
    <property type="evidence" value="ECO:0000266"/>
    <property type="project" value="RGD"/>
</dbReference>
<dbReference type="GO" id="GO:0010667">
    <property type="term" value="P:negative regulation of cardiac muscle cell apoptotic process"/>
    <property type="evidence" value="ECO:0000315"/>
    <property type="project" value="RGD"/>
</dbReference>
<dbReference type="GO" id="GO:1900038">
    <property type="term" value="P:negative regulation of cellular response to hypoxia"/>
    <property type="evidence" value="ECO:0000315"/>
    <property type="project" value="RGD"/>
</dbReference>
<dbReference type="GO" id="GO:2000352">
    <property type="term" value="P:negative regulation of endothelial cell apoptotic process"/>
    <property type="evidence" value="ECO:0000266"/>
    <property type="project" value="RGD"/>
</dbReference>
<dbReference type="GO" id="GO:0110076">
    <property type="term" value="P:negative regulation of ferroptosis"/>
    <property type="evidence" value="ECO:0000250"/>
    <property type="project" value="UniProtKB"/>
</dbReference>
<dbReference type="GO" id="GO:1902037">
    <property type="term" value="P:negative regulation of hematopoietic stem cell differentiation"/>
    <property type="evidence" value="ECO:0000266"/>
    <property type="project" value="RGD"/>
</dbReference>
<dbReference type="GO" id="GO:1902176">
    <property type="term" value="P:negative regulation of oxidative stress-induced intrinsic apoptotic signaling pathway"/>
    <property type="evidence" value="ECO:0000266"/>
    <property type="project" value="RGD"/>
</dbReference>
<dbReference type="GO" id="GO:1904753">
    <property type="term" value="P:negative regulation of vascular associated smooth muscle cell migration"/>
    <property type="evidence" value="ECO:0000315"/>
    <property type="project" value="RGD"/>
</dbReference>
<dbReference type="GO" id="GO:0036499">
    <property type="term" value="P:PERK-mediated unfolded protein response"/>
    <property type="evidence" value="ECO:0000266"/>
    <property type="project" value="RGD"/>
</dbReference>
<dbReference type="GO" id="GO:0045766">
    <property type="term" value="P:positive regulation of angiogenesis"/>
    <property type="evidence" value="ECO:0000315"/>
    <property type="project" value="RGD"/>
</dbReference>
<dbReference type="GO" id="GO:0030194">
    <property type="term" value="P:positive regulation of blood coagulation"/>
    <property type="evidence" value="ECO:0000266"/>
    <property type="project" value="RGD"/>
</dbReference>
<dbReference type="GO" id="GO:0043536">
    <property type="term" value="P:positive regulation of blood vessel endothelial cell migration"/>
    <property type="evidence" value="ECO:0000315"/>
    <property type="project" value="RGD"/>
</dbReference>
<dbReference type="GO" id="GO:0046326">
    <property type="term" value="P:positive regulation of D-glucose import"/>
    <property type="evidence" value="ECO:0000266"/>
    <property type="project" value="RGD"/>
</dbReference>
<dbReference type="GO" id="GO:0045893">
    <property type="term" value="P:positive regulation of DNA-templated transcription"/>
    <property type="evidence" value="ECO:0000266"/>
    <property type="project" value="RGD"/>
</dbReference>
<dbReference type="GO" id="GO:0010628">
    <property type="term" value="P:positive regulation of gene expression"/>
    <property type="evidence" value="ECO:0000315"/>
    <property type="project" value="RGD"/>
</dbReference>
<dbReference type="GO" id="GO:1903788">
    <property type="term" value="P:positive regulation of glutathione biosynthetic process"/>
    <property type="evidence" value="ECO:0000266"/>
    <property type="project" value="RGD"/>
</dbReference>
<dbReference type="GO" id="GO:0010976">
    <property type="term" value="P:positive regulation of neuron projection development"/>
    <property type="evidence" value="ECO:0000315"/>
    <property type="project" value="RGD"/>
</dbReference>
<dbReference type="GO" id="GO:2000379">
    <property type="term" value="P:positive regulation of reactive oxygen species metabolic process"/>
    <property type="evidence" value="ECO:0000266"/>
    <property type="project" value="RGD"/>
</dbReference>
<dbReference type="GO" id="GO:0045944">
    <property type="term" value="P:positive regulation of transcription by RNA polymerase II"/>
    <property type="evidence" value="ECO:0000315"/>
    <property type="project" value="UniProtKB"/>
</dbReference>
<dbReference type="GO" id="GO:0010499">
    <property type="term" value="P:proteasomal ubiquitin-independent protein catabolic process"/>
    <property type="evidence" value="ECO:0000250"/>
    <property type="project" value="UniProtKB"/>
</dbReference>
<dbReference type="GO" id="GO:0043161">
    <property type="term" value="P:proteasome-mediated ubiquitin-dependent protein catabolic process"/>
    <property type="evidence" value="ECO:0000250"/>
    <property type="project" value="UniProtKB"/>
</dbReference>
<dbReference type="GO" id="GO:0016567">
    <property type="term" value="P:protein ubiquitination"/>
    <property type="evidence" value="ECO:0000250"/>
    <property type="project" value="UniProtKB"/>
</dbReference>
<dbReference type="GO" id="GO:0072593">
    <property type="term" value="P:reactive oxygen species metabolic process"/>
    <property type="evidence" value="ECO:0000266"/>
    <property type="project" value="RGD"/>
</dbReference>
<dbReference type="GO" id="GO:1900407">
    <property type="term" value="P:regulation of cellular response to oxidative stress"/>
    <property type="evidence" value="ECO:0000266"/>
    <property type="project" value="RGD"/>
</dbReference>
<dbReference type="GO" id="GO:0006355">
    <property type="term" value="P:regulation of DNA-templated transcription"/>
    <property type="evidence" value="ECO:0000266"/>
    <property type="project" value="RGD"/>
</dbReference>
<dbReference type="GO" id="GO:0045995">
    <property type="term" value="P:regulation of embryonic development"/>
    <property type="evidence" value="ECO:0000266"/>
    <property type="project" value="RGD"/>
</dbReference>
<dbReference type="GO" id="GO:0045088">
    <property type="term" value="P:regulation of innate immune response"/>
    <property type="evidence" value="ECO:0000250"/>
    <property type="project" value="UniProtKB"/>
</dbReference>
<dbReference type="GO" id="GO:2000121">
    <property type="term" value="P:regulation of removal of superoxide radicals"/>
    <property type="evidence" value="ECO:0000266"/>
    <property type="project" value="RGD"/>
</dbReference>
<dbReference type="GO" id="GO:0006357">
    <property type="term" value="P:regulation of transcription by RNA polymerase II"/>
    <property type="evidence" value="ECO:0000318"/>
    <property type="project" value="GO_Central"/>
</dbReference>
<dbReference type="GO" id="GO:0034976">
    <property type="term" value="P:response to endoplasmic reticulum stress"/>
    <property type="evidence" value="ECO:0000266"/>
    <property type="project" value="RGD"/>
</dbReference>
<dbReference type="GO" id="GO:0002931">
    <property type="term" value="P:response to ischemia"/>
    <property type="evidence" value="ECO:0000270"/>
    <property type="project" value="RGD"/>
</dbReference>
<dbReference type="GO" id="GO:0006979">
    <property type="term" value="P:response to oxidative stress"/>
    <property type="evidence" value="ECO:0000266"/>
    <property type="project" value="RGD"/>
</dbReference>
<dbReference type="GO" id="GO:0009410">
    <property type="term" value="P:response to xenobiotic stimulus"/>
    <property type="evidence" value="ECO:0000270"/>
    <property type="project" value="RGD"/>
</dbReference>
<dbReference type="CDD" id="cd14720">
    <property type="entry name" value="bZIP_NFE2-like"/>
    <property type="match status" value="1"/>
</dbReference>
<dbReference type="FunFam" id="1.10.880.10:FF:000001">
    <property type="entry name" value="Nuclear factor erythroid 2-related factor 2"/>
    <property type="match status" value="1"/>
</dbReference>
<dbReference type="Gene3D" id="1.10.880.10">
    <property type="entry name" value="Transcription factor, Skn-1-like, DNA-binding domain"/>
    <property type="match status" value="1"/>
</dbReference>
<dbReference type="InterPro" id="IPR004827">
    <property type="entry name" value="bZIP"/>
</dbReference>
<dbReference type="InterPro" id="IPR004826">
    <property type="entry name" value="bZIP_Maf"/>
</dbReference>
<dbReference type="InterPro" id="IPR046347">
    <property type="entry name" value="bZIP_sf"/>
</dbReference>
<dbReference type="InterPro" id="IPR047167">
    <property type="entry name" value="NFE2-like"/>
</dbReference>
<dbReference type="InterPro" id="IPR008917">
    <property type="entry name" value="TF_DNA-bd_sf"/>
</dbReference>
<dbReference type="PANTHER" id="PTHR24411">
    <property type="entry name" value="NUCLEAR FACTOR ERYTHROID 2-RELATED FACTOR"/>
    <property type="match status" value="1"/>
</dbReference>
<dbReference type="PANTHER" id="PTHR24411:SF3">
    <property type="entry name" value="NUCLEAR FACTOR ERYTHROID 2-RELATED FACTOR 2"/>
    <property type="match status" value="1"/>
</dbReference>
<dbReference type="Pfam" id="PF03131">
    <property type="entry name" value="bZIP_Maf"/>
    <property type="match status" value="1"/>
</dbReference>
<dbReference type="SMART" id="SM00338">
    <property type="entry name" value="BRLZ"/>
    <property type="match status" value="1"/>
</dbReference>
<dbReference type="SUPFAM" id="SSF47454">
    <property type="entry name" value="A DNA-binding domain in eukaryotic transcription factors"/>
    <property type="match status" value="1"/>
</dbReference>
<dbReference type="SUPFAM" id="SSF57959">
    <property type="entry name" value="Leucine zipper domain"/>
    <property type="match status" value="1"/>
</dbReference>
<dbReference type="PROSITE" id="PS50217">
    <property type="entry name" value="BZIP"/>
    <property type="match status" value="1"/>
</dbReference>
<dbReference type="PROSITE" id="PS00036">
    <property type="entry name" value="BZIP_BASIC"/>
    <property type="match status" value="1"/>
</dbReference>
<comment type="function">
    <text evidence="1 2 6">Transcription factor that plays a key role in the response to oxidative stress: binds to antioxidant response (ARE) elements present in the promoter region of many cytoprotective genes, such as phase 2 detoxifying enzymes, and promotes their expression, thereby neutralizing reactive electrophiles (PubMed:16314513). In normal conditions, ubiquitinated and degraded in the cytoplasm by the BCR(KEAP1) complex. In response to oxidative stress, electrophile metabolites inhibit activity of the BCR(KEAP1) complex, promoting nuclear accumulation of NFE2L2/NRF2, heterodimerization with one of the small Maf proteins and binding to ARE elements of cytoprotective target genes. The NFE2L2/NRF2 pathway is also activated in response to selective autophagy: autophagy promotes interaction between KEAP1 and SQSTM1/p62 and subsequent inactivation of the BCR(KEAP1) complex, leading to NFE2L2/NRF2 nuclear accumulation and expression of cytoprotective genes (By similarity). The NFE2L2/NRF2 pathway is also activated during the unfolded protein response (UPR), contributing to redox homeostasis and cell survival following endoplasmic reticulum stress (By similarity). May also be involved in the transcriptional activation of genes of the beta-globin cluster by mediating enhancer activity of hypersensitive site 2 of the beta-globin locus control region (By similarity). Also plays an important role in the regulation of the innate immune response. It is a critical regulator of the innate immune response and survival during sepsis by maintaining redox homeostasis and restraint of the dysregulation of pro-inflammatory signaling pathways like MyD88-dependent and -independent and TNF-alpha signaling. Suppresses macrophage inflammatory response by blocking pro-inflammatory cytokine transcription and the induction of IL6. Binds to the proximity of pro-inflammatory genes in macrophages and inhibits RNA Pol II recruitment. The inhibition is independent of the Nrf2-binding motif and reactive oxygen species level (By similarity). Represses antiviral cytosolic DNA sensing by suppressing the expression of the adapter protein STING1 and decreasing responsiveness to STING1 agonists while increasing susceptibility to infection with DNA viruses (By similarity).</text>
</comment>
<comment type="subunit">
    <text evidence="1 2 6">Heterodimer; heterodimerizes with small Maf proteins (PubMed:16314513). Interacts (via the bZIP domain) with MAFG and MAFK; required for binding to antioxidant response elements (AREs) on DNA (PubMed:16314513). Interacts with KEAP1; the interaction is direct and promotes ubiquitination by the BCR(KEAP1) E3 ubiquitin ligase complex (By similarity). Forms a ternary complex with PGAM5 and KEAP1. Interacts with EEF1D at heat shock promoter elements (HSE) (By similarity). Interacts via its leucine-zipper domain with the coiled-coil domain of PMF1 (By similarity). Interacts with CHD6; involved in activation of the transcription (PubMed:16314513). Interacts with ESRRB; represses NFE2L2 transcriptional activity (By similarity). Interacts with MOTS-c, a peptide produced by the mitochondrially encoded 12S rRNA MT-RNR1; the interaction occurs in the nucleus following metabolic stress (By similarity).</text>
</comment>
<comment type="subcellular location">
    <subcellularLocation>
        <location evidence="2">Cytoplasm</location>
        <location evidence="2">Cytosol</location>
    </subcellularLocation>
    <subcellularLocation>
        <location evidence="3 6">Nucleus</location>
    </subcellularLocation>
    <text evidence="2">Cytosolic under unstressed conditions: ubiquitinated and degraded by the BCR(KEAP1) E3 ubiquitin ligase complex. Translocates into the nucleus upon induction by electrophilic agents that inactivate the BCR(KEAP1) E3 ubiquitin ligase complex.</text>
</comment>
<comment type="alternative products">
    <event type="alternative splicing"/>
    <isoform>
        <id>O54968-1</id>
        <name>1</name>
        <sequence type="displayed"/>
    </isoform>
    <isoform>
        <id>O54968-2</id>
        <name>2</name>
        <sequence type="described" ref="VSP_025046"/>
    </isoform>
</comment>
<comment type="domain">
    <text evidence="2">The ETGE motif, and to a lower extent the DLG motif, mediate interaction with KEAP1.</text>
</comment>
<comment type="PTM">
    <text evidence="2">Ubiquitinated in the cytoplasm by the BCR(KEAP1) E3 ubiquitin ligase complex leading to its degradation. In response to oxidative stress, electrophile metabolites, such as sulforaphane, modify KEAP1, leading to inhibit activity of the BCR(KEAP1) complex, promoting NFE2L2/NRF2 nuclear accumulation and activity. In response to autophagy, the BCR(KEAP1) complex is inactivated.</text>
</comment>
<comment type="PTM">
    <text evidence="2 5">Phosphorylated by EIF2AK3/PERK following unfolded protein response (UPR), promoting dissociation from its cytoplasmic inhibitor KEAP1, followed by its translocation into the nucleus (By similarity). Phosphorylation of Ser-40 by PKC in response to oxidative stress dissociates NFE2L2 from its cytoplasmic inhibitor KEAP1, promoting its translocation into the nucleus (PubMed:12198130).</text>
</comment>
<comment type="PTM">
    <text evidence="1">Acetylation at Lys-595 and Lys-598 increases nuclear localization whereas deacetylation by SIRT1 enhances cytoplasmic presence.</text>
</comment>
<comment type="PTM">
    <text evidence="1">Glycation impairs transcription factor activity by preventing heterodimerization with small Maf proteins. Deglycation by FN3K restores activity.</text>
</comment>
<comment type="similarity">
    <text evidence="9">Belongs to the bZIP family. CNC subfamily.</text>
</comment>